<gene>
    <name type="primary">PCMP-E86</name>
    <name type="ordered locus">At3g53360</name>
    <name type="ORF">F4P12_60</name>
</gene>
<comment type="subcellular location">
    <subcellularLocation>
        <location evidence="2">Mitochondrion</location>
    </subcellularLocation>
</comment>
<comment type="similarity">
    <text evidence="2">Belongs to the PPR family. PCMP-E subfamily.</text>
</comment>
<comment type="online information" name="Pentatricopeptide repeat proteins">
    <link uri="https://ppr.plantenergy.uwa.edu.au"/>
</comment>
<sequence>MATMLRLGARVSVSNSQILATSSVVSTIKTEELMNDHINSLCKSNFYREALEAFDFAQKNSSFKIRLRTYISLICACSSSRSLAQGRKIHDHILNSNCKYDTILNNHILSMYGKCGSLRDAREVFDFMPERNLVSYTSVITGYSQNGQGAEAIRLYLKMLQEDLVPDQFAFGSIIKACASSSDVGLGKQLHAQVIKLESSSHLIAQNALIAMYVRFNQMSDASRVFYGIPMKDLISWSSIIAGFSQLGFEFEALSHLKEMLSFGVFHPNEYIFGSSLKACSSLLRPDYGSQIHGLCIKSELAGNAIAGCSLCDMYARCGFLNSARRVFDQIERPDTASWNVIIAGLANNGYADEAVSVFSQMRSSGFIPDAISLRSLLCAQTKPMALSQGMQIHSYIIKWGFLADLTVCNSLLTMYTFCSDLYCCFNLFEDFRNNADSVSWNTILTACLQHEQPVEMLRLFKLMLVSECEPDHITMGNLLRGCVEISSLKLGSQVHCYSLKTGLAPEQFIKNGLIDMYAKCGSLGQARRIFDSMDNRDVVSWSTLIVGYAQSGFGEEALILFKEMKSAGIEPNHVTFVGVLTACSHVGLVEEGLKLYATMQTEHGISPTKEHCSCVVDLLARAGRLNEAERFIDEMKLEPDVVVWKTLLSACKTQGNVHLAQKAAENILKIDPFNSTAHVLLCSMHASSGNWENAALLRSSMKKHDVKKIPGQSWIEIEDKIHIFFAEDIFHPERDDIYTVLHNIWSQMLDECNPQHKKRLQFIHETG</sequence>
<protein>
    <recommendedName>
        <fullName>Pentatricopeptide repeat-containing protein At3g53360, mitochondrial</fullName>
    </recommendedName>
</protein>
<name>PP280_ARATH</name>
<keyword id="KW-0496">Mitochondrion</keyword>
<keyword id="KW-1185">Reference proteome</keyword>
<keyword id="KW-0677">Repeat</keyword>
<keyword id="KW-0809">Transit peptide</keyword>
<proteinExistence type="evidence at transcript level"/>
<accession>Q9LFI1</accession>
<feature type="transit peptide" description="Mitochondrion" evidence="1">
    <location>
        <begin position="1"/>
        <end position="70"/>
    </location>
</feature>
<feature type="chain" id="PRO_0000356139" description="Pentatricopeptide repeat-containing protein At3g53360, mitochondrial">
    <location>
        <begin position="71"/>
        <end position="768"/>
    </location>
</feature>
<feature type="repeat" description="PPR 1">
    <location>
        <begin position="30"/>
        <end position="60"/>
    </location>
</feature>
<feature type="repeat" description="PPR 2">
    <location>
        <begin position="66"/>
        <end position="100"/>
    </location>
</feature>
<feature type="repeat" description="PPR 3">
    <location>
        <begin position="101"/>
        <end position="131"/>
    </location>
</feature>
<feature type="repeat" description="PPR 4">
    <location>
        <begin position="132"/>
        <end position="166"/>
    </location>
</feature>
<feature type="repeat" description="PPR 5">
    <location>
        <begin position="167"/>
        <end position="201"/>
    </location>
</feature>
<feature type="repeat" description="PPR 6">
    <location>
        <begin position="202"/>
        <end position="232"/>
    </location>
</feature>
<feature type="repeat" description="PPR 7">
    <location>
        <begin position="233"/>
        <end position="267"/>
    </location>
</feature>
<feature type="repeat" description="PPR 8">
    <location>
        <begin position="269"/>
        <end position="303"/>
    </location>
</feature>
<feature type="repeat" description="PPR 9">
    <location>
        <begin position="304"/>
        <end position="334"/>
    </location>
</feature>
<feature type="repeat" description="PPR 10">
    <location>
        <begin position="335"/>
        <end position="369"/>
    </location>
</feature>
<feature type="repeat" description="PPR 11">
    <location>
        <begin position="370"/>
        <end position="404"/>
    </location>
</feature>
<feature type="repeat" description="PPR 12">
    <location>
        <begin position="405"/>
        <end position="435"/>
    </location>
</feature>
<feature type="repeat" description="PPR 13">
    <location>
        <begin position="437"/>
        <end position="471"/>
    </location>
</feature>
<feature type="repeat" description="PPR 14">
    <location>
        <begin position="472"/>
        <end position="506"/>
    </location>
</feature>
<feature type="repeat" description="PPR 15">
    <location>
        <begin position="507"/>
        <end position="537"/>
    </location>
</feature>
<feature type="repeat" description="PPR 16">
    <location>
        <begin position="538"/>
        <end position="572"/>
    </location>
</feature>
<feature type="repeat" description="PPR 17">
    <location>
        <begin position="573"/>
        <end position="608"/>
    </location>
</feature>
<feature type="repeat" description="PPR 18">
    <location>
        <begin position="609"/>
        <end position="639"/>
    </location>
</feature>
<feature type="region of interest" description="Type E motif">
    <location>
        <begin position="644"/>
        <end position="719"/>
    </location>
</feature>
<feature type="region of interest" description="Type E(+) motif">
    <location>
        <begin position="720"/>
        <end position="750"/>
    </location>
</feature>
<dbReference type="EMBL" id="AL132966">
    <property type="protein sequence ID" value="CAB67643.1"/>
    <property type="molecule type" value="Genomic_DNA"/>
</dbReference>
<dbReference type="EMBL" id="CP002686">
    <property type="protein sequence ID" value="AEE79075.1"/>
    <property type="molecule type" value="Genomic_DNA"/>
</dbReference>
<dbReference type="EMBL" id="CP002686">
    <property type="protein sequence ID" value="ANM65695.1"/>
    <property type="molecule type" value="Genomic_DNA"/>
</dbReference>
<dbReference type="PIR" id="T45876">
    <property type="entry name" value="T45876"/>
</dbReference>
<dbReference type="RefSeq" id="NP_001319736.1">
    <property type="nucleotide sequence ID" value="NM_001339618.1"/>
</dbReference>
<dbReference type="RefSeq" id="NP_190904.1">
    <property type="nucleotide sequence ID" value="NM_115196.2"/>
</dbReference>
<dbReference type="SMR" id="Q9LFI1"/>
<dbReference type="FunCoup" id="Q9LFI1">
    <property type="interactions" value="199"/>
</dbReference>
<dbReference type="STRING" id="3702.Q9LFI1"/>
<dbReference type="iPTMnet" id="Q9LFI1"/>
<dbReference type="PaxDb" id="3702-AT3G53360.1"/>
<dbReference type="ProteomicsDB" id="248961"/>
<dbReference type="EnsemblPlants" id="AT3G53360.1">
    <property type="protein sequence ID" value="AT3G53360.1"/>
    <property type="gene ID" value="AT3G53360"/>
</dbReference>
<dbReference type="EnsemblPlants" id="AT3G53360.2">
    <property type="protein sequence ID" value="AT3G53360.2"/>
    <property type="gene ID" value="AT3G53360"/>
</dbReference>
<dbReference type="GeneID" id="824504"/>
<dbReference type="Gramene" id="AT3G53360.1">
    <property type="protein sequence ID" value="AT3G53360.1"/>
    <property type="gene ID" value="AT3G53360"/>
</dbReference>
<dbReference type="Gramene" id="AT3G53360.2">
    <property type="protein sequence ID" value="AT3G53360.2"/>
    <property type="gene ID" value="AT3G53360"/>
</dbReference>
<dbReference type="KEGG" id="ath:AT3G53360"/>
<dbReference type="Araport" id="AT3G53360"/>
<dbReference type="TAIR" id="AT3G53360"/>
<dbReference type="eggNOG" id="KOG4197">
    <property type="taxonomic scope" value="Eukaryota"/>
</dbReference>
<dbReference type="HOGENOM" id="CLU_002706_15_6_1"/>
<dbReference type="InParanoid" id="Q9LFI1"/>
<dbReference type="OMA" id="QQGFEME"/>
<dbReference type="PhylomeDB" id="Q9LFI1"/>
<dbReference type="PRO" id="PR:Q9LFI1"/>
<dbReference type="Proteomes" id="UP000006548">
    <property type="component" value="Chromosome 3"/>
</dbReference>
<dbReference type="ExpressionAtlas" id="Q9LFI1">
    <property type="expression patterns" value="baseline and differential"/>
</dbReference>
<dbReference type="GO" id="GO:0005739">
    <property type="term" value="C:mitochondrion"/>
    <property type="evidence" value="ECO:0007669"/>
    <property type="project" value="UniProtKB-SubCell"/>
</dbReference>
<dbReference type="GO" id="GO:0003723">
    <property type="term" value="F:RNA binding"/>
    <property type="evidence" value="ECO:0007669"/>
    <property type="project" value="InterPro"/>
</dbReference>
<dbReference type="GO" id="GO:0009451">
    <property type="term" value="P:RNA modification"/>
    <property type="evidence" value="ECO:0007669"/>
    <property type="project" value="InterPro"/>
</dbReference>
<dbReference type="FunFam" id="1.25.40.10:FF:000366">
    <property type="entry name" value="Pentatricopeptide (PPR) repeat-containing protein"/>
    <property type="match status" value="1"/>
</dbReference>
<dbReference type="FunFam" id="1.25.40.10:FF:000227">
    <property type="entry name" value="Pentatricopeptide repeat-containing protein At3g13880"/>
    <property type="match status" value="1"/>
</dbReference>
<dbReference type="FunFam" id="1.25.40.10:FF:001302">
    <property type="entry name" value="Pentatricopeptide repeat-containing protein At3g53360, mitochondrial"/>
    <property type="match status" value="1"/>
</dbReference>
<dbReference type="FunFam" id="1.25.40.10:FF:000031">
    <property type="entry name" value="Pentatricopeptide repeat-containing protein mitochondrial"/>
    <property type="match status" value="1"/>
</dbReference>
<dbReference type="FunFam" id="1.25.40.10:FF:000689">
    <property type="entry name" value="Tetratricopeptide repeat (TPR)-like superfamily protein"/>
    <property type="match status" value="1"/>
</dbReference>
<dbReference type="Gene3D" id="1.25.40.10">
    <property type="entry name" value="Tetratricopeptide repeat domain"/>
    <property type="match status" value="4"/>
</dbReference>
<dbReference type="InterPro" id="IPR046848">
    <property type="entry name" value="E_motif"/>
</dbReference>
<dbReference type="InterPro" id="IPR002885">
    <property type="entry name" value="Pentatricopeptide_rpt"/>
</dbReference>
<dbReference type="InterPro" id="IPR046960">
    <property type="entry name" value="PPR_At4g14850-like_plant"/>
</dbReference>
<dbReference type="InterPro" id="IPR011990">
    <property type="entry name" value="TPR-like_helical_dom_sf"/>
</dbReference>
<dbReference type="NCBIfam" id="TIGR00756">
    <property type="entry name" value="PPR"/>
    <property type="match status" value="5"/>
</dbReference>
<dbReference type="PANTHER" id="PTHR24015:SF328">
    <property type="entry name" value="OS06G0611200 PROTEIN"/>
    <property type="match status" value="1"/>
</dbReference>
<dbReference type="PANTHER" id="PTHR24015">
    <property type="entry name" value="OS07G0578800 PROTEIN-RELATED"/>
    <property type="match status" value="1"/>
</dbReference>
<dbReference type="Pfam" id="PF20431">
    <property type="entry name" value="E_motif"/>
    <property type="match status" value="1"/>
</dbReference>
<dbReference type="Pfam" id="PF01535">
    <property type="entry name" value="PPR"/>
    <property type="match status" value="2"/>
</dbReference>
<dbReference type="Pfam" id="PF13041">
    <property type="entry name" value="PPR_2"/>
    <property type="match status" value="4"/>
</dbReference>
<dbReference type="SUPFAM" id="SSF48452">
    <property type="entry name" value="TPR-like"/>
    <property type="match status" value="1"/>
</dbReference>
<dbReference type="PROSITE" id="PS51375">
    <property type="entry name" value="PPR"/>
    <property type="match status" value="18"/>
</dbReference>
<reference key="1">
    <citation type="journal article" date="2000" name="Nature">
        <title>Sequence and analysis of chromosome 3 of the plant Arabidopsis thaliana.</title>
        <authorList>
            <person name="Salanoubat M."/>
            <person name="Lemcke K."/>
            <person name="Rieger M."/>
            <person name="Ansorge W."/>
            <person name="Unseld M."/>
            <person name="Fartmann B."/>
            <person name="Valle G."/>
            <person name="Bloecker H."/>
            <person name="Perez-Alonso M."/>
            <person name="Obermaier B."/>
            <person name="Delseny M."/>
            <person name="Boutry M."/>
            <person name="Grivell L.A."/>
            <person name="Mache R."/>
            <person name="Puigdomenech P."/>
            <person name="De Simone V."/>
            <person name="Choisne N."/>
            <person name="Artiguenave F."/>
            <person name="Robert C."/>
            <person name="Brottier P."/>
            <person name="Wincker P."/>
            <person name="Cattolico L."/>
            <person name="Weissenbach J."/>
            <person name="Saurin W."/>
            <person name="Quetier F."/>
            <person name="Schaefer M."/>
            <person name="Mueller-Auer S."/>
            <person name="Gabel C."/>
            <person name="Fuchs M."/>
            <person name="Benes V."/>
            <person name="Wurmbach E."/>
            <person name="Drzonek H."/>
            <person name="Erfle H."/>
            <person name="Jordan N."/>
            <person name="Bangert S."/>
            <person name="Wiedelmann R."/>
            <person name="Kranz H."/>
            <person name="Voss H."/>
            <person name="Holland R."/>
            <person name="Brandt P."/>
            <person name="Nyakatura G."/>
            <person name="Vezzi A."/>
            <person name="D'Angelo M."/>
            <person name="Pallavicini A."/>
            <person name="Toppo S."/>
            <person name="Simionati B."/>
            <person name="Conrad A."/>
            <person name="Hornischer K."/>
            <person name="Kauer G."/>
            <person name="Loehnert T.-H."/>
            <person name="Nordsiek G."/>
            <person name="Reichelt J."/>
            <person name="Scharfe M."/>
            <person name="Schoen O."/>
            <person name="Bargues M."/>
            <person name="Terol J."/>
            <person name="Climent J."/>
            <person name="Navarro P."/>
            <person name="Collado C."/>
            <person name="Perez-Perez A."/>
            <person name="Ottenwaelder B."/>
            <person name="Duchemin D."/>
            <person name="Cooke R."/>
            <person name="Laudie M."/>
            <person name="Berger-Llauro C."/>
            <person name="Purnelle B."/>
            <person name="Masuy D."/>
            <person name="de Haan M."/>
            <person name="Maarse A.C."/>
            <person name="Alcaraz J.-P."/>
            <person name="Cottet A."/>
            <person name="Casacuberta E."/>
            <person name="Monfort A."/>
            <person name="Argiriou A."/>
            <person name="Flores M."/>
            <person name="Liguori R."/>
            <person name="Vitale D."/>
            <person name="Mannhaupt G."/>
            <person name="Haase D."/>
            <person name="Schoof H."/>
            <person name="Rudd S."/>
            <person name="Zaccaria P."/>
            <person name="Mewes H.-W."/>
            <person name="Mayer K.F.X."/>
            <person name="Kaul S."/>
            <person name="Town C.D."/>
            <person name="Koo H.L."/>
            <person name="Tallon L.J."/>
            <person name="Jenkins J."/>
            <person name="Rooney T."/>
            <person name="Rizzo M."/>
            <person name="Walts A."/>
            <person name="Utterback T."/>
            <person name="Fujii C.Y."/>
            <person name="Shea T.P."/>
            <person name="Creasy T.H."/>
            <person name="Haas B."/>
            <person name="Maiti R."/>
            <person name="Wu D."/>
            <person name="Peterson J."/>
            <person name="Van Aken S."/>
            <person name="Pai G."/>
            <person name="Militscher J."/>
            <person name="Sellers P."/>
            <person name="Gill J.E."/>
            <person name="Feldblyum T.V."/>
            <person name="Preuss D."/>
            <person name="Lin X."/>
            <person name="Nierman W.C."/>
            <person name="Salzberg S.L."/>
            <person name="White O."/>
            <person name="Venter J.C."/>
            <person name="Fraser C.M."/>
            <person name="Kaneko T."/>
            <person name="Nakamura Y."/>
            <person name="Sato S."/>
            <person name="Kato T."/>
            <person name="Asamizu E."/>
            <person name="Sasamoto S."/>
            <person name="Kimura T."/>
            <person name="Idesawa K."/>
            <person name="Kawashima K."/>
            <person name="Kishida Y."/>
            <person name="Kiyokawa C."/>
            <person name="Kohara M."/>
            <person name="Matsumoto M."/>
            <person name="Matsuno A."/>
            <person name="Muraki A."/>
            <person name="Nakayama S."/>
            <person name="Nakazaki N."/>
            <person name="Shinpo S."/>
            <person name="Takeuchi C."/>
            <person name="Wada T."/>
            <person name="Watanabe A."/>
            <person name="Yamada M."/>
            <person name="Yasuda M."/>
            <person name="Tabata S."/>
        </authorList>
    </citation>
    <scope>NUCLEOTIDE SEQUENCE [LARGE SCALE GENOMIC DNA]</scope>
    <source>
        <strain>cv. Columbia</strain>
    </source>
</reference>
<reference key="2">
    <citation type="journal article" date="2017" name="Plant J.">
        <title>Araport11: a complete reannotation of the Arabidopsis thaliana reference genome.</title>
        <authorList>
            <person name="Cheng C.Y."/>
            <person name="Krishnakumar V."/>
            <person name="Chan A.P."/>
            <person name="Thibaud-Nissen F."/>
            <person name="Schobel S."/>
            <person name="Town C.D."/>
        </authorList>
    </citation>
    <scope>GENOME REANNOTATION</scope>
    <source>
        <strain>cv. Columbia</strain>
    </source>
</reference>
<reference key="3">
    <citation type="journal article" date="2004" name="Plant Cell">
        <title>Genome-wide analysis of Arabidopsis pentatricopeptide repeat proteins reveals their essential role in organelle biogenesis.</title>
        <authorList>
            <person name="Lurin C."/>
            <person name="Andres C."/>
            <person name="Aubourg S."/>
            <person name="Bellaoui M."/>
            <person name="Bitton F."/>
            <person name="Bruyere C."/>
            <person name="Caboche M."/>
            <person name="Debast C."/>
            <person name="Gualberto J."/>
            <person name="Hoffmann B."/>
            <person name="Lecharny A."/>
            <person name="Le Ret M."/>
            <person name="Martin-Magniette M.-L."/>
            <person name="Mireau H."/>
            <person name="Peeters N."/>
            <person name="Renou J.-P."/>
            <person name="Szurek B."/>
            <person name="Taconnat L."/>
            <person name="Small I."/>
        </authorList>
    </citation>
    <scope>GENE FAMILY</scope>
</reference>
<evidence type="ECO:0000255" key="1"/>
<evidence type="ECO:0000305" key="2"/>
<organism>
    <name type="scientific">Arabidopsis thaliana</name>
    <name type="common">Mouse-ear cress</name>
    <dbReference type="NCBI Taxonomy" id="3702"/>
    <lineage>
        <taxon>Eukaryota</taxon>
        <taxon>Viridiplantae</taxon>
        <taxon>Streptophyta</taxon>
        <taxon>Embryophyta</taxon>
        <taxon>Tracheophyta</taxon>
        <taxon>Spermatophyta</taxon>
        <taxon>Magnoliopsida</taxon>
        <taxon>eudicotyledons</taxon>
        <taxon>Gunneridae</taxon>
        <taxon>Pentapetalae</taxon>
        <taxon>rosids</taxon>
        <taxon>malvids</taxon>
        <taxon>Brassicales</taxon>
        <taxon>Brassicaceae</taxon>
        <taxon>Camelineae</taxon>
        <taxon>Arabidopsis</taxon>
    </lineage>
</organism>